<feature type="chain" id="PRO_0000385133" description="Uncharacterized protein ORF122">
    <location>
        <begin position="1"/>
        <end position="384"/>
    </location>
</feature>
<feature type="region of interest" description="Disordered" evidence="1">
    <location>
        <begin position="327"/>
        <end position="358"/>
    </location>
</feature>
<feature type="compositionally biased region" description="Basic residues" evidence="1">
    <location>
        <begin position="327"/>
        <end position="339"/>
    </location>
</feature>
<reference key="1">
    <citation type="journal article" date="2005" name="J. Gen. Virol.">
        <title>A novel class of herpesvirus with bivalve hosts.</title>
        <authorList>
            <person name="Davison A.J."/>
            <person name="Trus B.L."/>
            <person name="Cheng N."/>
            <person name="Steven A.C."/>
            <person name="Watson M.S."/>
            <person name="Cunningham C."/>
            <person name="Le Deuff R.M."/>
            <person name="Renault T."/>
        </authorList>
    </citation>
    <scope>NUCLEOTIDE SEQUENCE [LARGE SCALE GENOMIC DNA]</scope>
</reference>
<proteinExistence type="predicted"/>
<organismHost>
    <name type="scientific">Magallana gigas</name>
    <name type="common">Pacific oyster</name>
    <name type="synonym">Crassostrea gigas</name>
    <dbReference type="NCBI Taxonomy" id="29159"/>
</organismHost>
<organismHost>
    <name type="scientific">Pecten maximus</name>
    <name type="common">King scallop</name>
    <name type="synonym">Pilgrim's clam</name>
    <dbReference type="NCBI Taxonomy" id="6579"/>
</organismHost>
<sequence length="384" mass="42978">MDALMVFDDMLDIPMSMQNNMIADDLLEQAAATASIAPIDIPMTPLQPEMEEEPEVEPEPVSQPEVVQVIEEPPTSTLVANERSEDFFEAAALLETVMEYVNSNDFTLKQLLAFNAAKKPKKSRKRKADSDAAPKQKKEKVEERYCVDSYEITEEIKGEIASAYEGLGALTPLRCAELIKESHELNGKIGGLDTIKDYVTLFSGRVCLYNTPANDVLTSYRKTYTNRYLERNKPTYNKDKTILCVRCATCGRKFKGEDDGEGCVKPNLTHATTTECGKRTICVMCSGIYAQLKTIPDLRAANRCLCCGVDKNKKASNAALFKVKKEKKEKKEKKEKKPKKAVEEEPKQYLTPEFVNDDEDSCDNDLSCLKNNTDLLATAMAELM</sequence>
<gene>
    <name type="ORF">ORF122</name>
</gene>
<evidence type="ECO:0000256" key="1">
    <source>
        <dbReference type="SAM" id="MobiDB-lite"/>
    </source>
</evidence>
<keyword id="KW-1185">Reference proteome</keyword>
<dbReference type="EMBL" id="AY509253">
    <property type="protein sequence ID" value="AAS01011.1"/>
    <property type="molecule type" value="Genomic_DNA"/>
</dbReference>
<dbReference type="EMBL" id="AY509253">
    <property type="protein sequence ID" value="AAS01014.1"/>
    <property type="molecule type" value="Genomic_DNA"/>
</dbReference>
<dbReference type="RefSeq" id="YP_024664.1">
    <property type="nucleotide sequence ID" value="NC_005881.2"/>
</dbReference>
<dbReference type="RefSeq" id="YP_024667.1">
    <property type="nucleotide sequence ID" value="NC_005881.2"/>
</dbReference>
<dbReference type="SMR" id="Q6R7A1"/>
<dbReference type="KEGG" id="vg:2948179"/>
<dbReference type="KEGG" id="vg:2948238"/>
<dbReference type="Proteomes" id="UP000007021">
    <property type="component" value="Segment"/>
</dbReference>
<accession>Q6R7A1</accession>
<name>Y122_OSHVF</name>
<protein>
    <recommendedName>
        <fullName>Uncharacterized protein ORF122</fullName>
    </recommendedName>
</protein>
<organism>
    <name type="scientific">Ostreid herpesvirus 1 (isolate France)</name>
    <name type="common">OsHV-1</name>
    <name type="synonym">Pacific oyster herpesvirus</name>
    <dbReference type="NCBI Taxonomy" id="654903"/>
    <lineage>
        <taxon>Viruses</taxon>
        <taxon>Duplodnaviria</taxon>
        <taxon>Heunggongvirae</taxon>
        <taxon>Peploviricota</taxon>
        <taxon>Herviviricetes</taxon>
        <taxon>Herpesvirales</taxon>
        <taxon>Malacoherpesviridae</taxon>
        <taxon>Ostreavirus</taxon>
        <taxon>Ostreavirus ostreidmalaco1</taxon>
        <taxon>Ostreid herpesvirus 1</taxon>
    </lineage>
</organism>